<organism>
    <name type="scientific">Streptococcus uberis (strain ATCC BAA-854 / 0140J)</name>
    <dbReference type="NCBI Taxonomy" id="218495"/>
    <lineage>
        <taxon>Bacteria</taxon>
        <taxon>Bacillati</taxon>
        <taxon>Bacillota</taxon>
        <taxon>Bacilli</taxon>
        <taxon>Lactobacillales</taxon>
        <taxon>Streptococcaceae</taxon>
        <taxon>Streptococcus</taxon>
    </lineage>
</organism>
<evidence type="ECO:0000255" key="1">
    <source>
        <dbReference type="HAMAP-Rule" id="MF_00091"/>
    </source>
</evidence>
<proteinExistence type="inferred from homology"/>
<comment type="function">
    <text evidence="1">Involved in the synthesis of autoinducer 2 (AI-2) which is secreted by bacteria and is used to communicate both the cell density and the metabolic potential of the environment. The regulation of gene expression in response to changes in cell density is called quorum sensing. Catalyzes the transformation of S-ribosylhomocysteine (RHC) to homocysteine (HC) and 4,5-dihydroxy-2,3-pentadione (DPD).</text>
</comment>
<comment type="catalytic activity">
    <reaction evidence="1">
        <text>S-(5-deoxy-D-ribos-5-yl)-L-homocysteine = (S)-4,5-dihydroxypentane-2,3-dione + L-homocysteine</text>
        <dbReference type="Rhea" id="RHEA:17753"/>
        <dbReference type="ChEBI" id="CHEBI:29484"/>
        <dbReference type="ChEBI" id="CHEBI:58195"/>
        <dbReference type="ChEBI" id="CHEBI:58199"/>
        <dbReference type="EC" id="4.4.1.21"/>
    </reaction>
</comment>
<comment type="cofactor">
    <cofactor evidence="1">
        <name>Fe cation</name>
        <dbReference type="ChEBI" id="CHEBI:24875"/>
    </cofactor>
    <text evidence="1">Binds 1 Fe cation per subunit.</text>
</comment>
<comment type="subunit">
    <text evidence="1">Homodimer.</text>
</comment>
<comment type="similarity">
    <text evidence="1">Belongs to the LuxS family.</text>
</comment>
<protein>
    <recommendedName>
        <fullName evidence="1">S-ribosylhomocysteine lyase</fullName>
        <ecNumber evidence="1">4.4.1.21</ecNumber>
    </recommendedName>
    <alternativeName>
        <fullName evidence="1">AI-2 synthesis protein</fullName>
    </alternativeName>
    <alternativeName>
        <fullName evidence="1">Autoinducer-2 production protein LuxS</fullName>
    </alternativeName>
</protein>
<name>LUXS_STRU0</name>
<keyword id="KW-0071">Autoinducer synthesis</keyword>
<keyword id="KW-0408">Iron</keyword>
<keyword id="KW-0456">Lyase</keyword>
<keyword id="KW-0479">Metal-binding</keyword>
<keyword id="KW-0673">Quorum sensing</keyword>
<keyword id="KW-1185">Reference proteome</keyword>
<accession>B9DV56</accession>
<dbReference type="EC" id="4.4.1.21" evidence="1"/>
<dbReference type="EMBL" id="AM946015">
    <property type="protein sequence ID" value="CAR43029.1"/>
    <property type="molecule type" value="Genomic_DNA"/>
</dbReference>
<dbReference type="RefSeq" id="WP_015911719.1">
    <property type="nucleotide sequence ID" value="NC_012004.1"/>
</dbReference>
<dbReference type="SMR" id="B9DV56"/>
<dbReference type="STRING" id="218495.SUB1399"/>
<dbReference type="KEGG" id="sub:SUB1399"/>
<dbReference type="eggNOG" id="COG1854">
    <property type="taxonomic scope" value="Bacteria"/>
</dbReference>
<dbReference type="HOGENOM" id="CLU_107531_2_1_9"/>
<dbReference type="OrthoDB" id="9788129at2"/>
<dbReference type="Proteomes" id="UP000000449">
    <property type="component" value="Chromosome"/>
</dbReference>
<dbReference type="GO" id="GO:0005506">
    <property type="term" value="F:iron ion binding"/>
    <property type="evidence" value="ECO:0007669"/>
    <property type="project" value="InterPro"/>
</dbReference>
<dbReference type="GO" id="GO:0043768">
    <property type="term" value="F:S-ribosylhomocysteine lyase activity"/>
    <property type="evidence" value="ECO:0007669"/>
    <property type="project" value="UniProtKB-UniRule"/>
</dbReference>
<dbReference type="GO" id="GO:0009372">
    <property type="term" value="P:quorum sensing"/>
    <property type="evidence" value="ECO:0007669"/>
    <property type="project" value="UniProtKB-UniRule"/>
</dbReference>
<dbReference type="Gene3D" id="3.30.1360.80">
    <property type="entry name" value="S-ribosylhomocysteinase (LuxS)"/>
    <property type="match status" value="1"/>
</dbReference>
<dbReference type="HAMAP" id="MF_00091">
    <property type="entry name" value="LuxS"/>
    <property type="match status" value="1"/>
</dbReference>
<dbReference type="InterPro" id="IPR037005">
    <property type="entry name" value="LuxS_sf"/>
</dbReference>
<dbReference type="InterPro" id="IPR011249">
    <property type="entry name" value="Metalloenz_LuxS/M16"/>
</dbReference>
<dbReference type="InterPro" id="IPR003815">
    <property type="entry name" value="S-ribosylhomocysteinase"/>
</dbReference>
<dbReference type="NCBIfam" id="NF002607">
    <property type="entry name" value="PRK02260.2-5"/>
    <property type="match status" value="1"/>
</dbReference>
<dbReference type="NCBIfam" id="NF002608">
    <property type="entry name" value="PRK02260.3-1"/>
    <property type="match status" value="1"/>
</dbReference>
<dbReference type="PANTHER" id="PTHR35799">
    <property type="entry name" value="S-RIBOSYLHOMOCYSTEINE LYASE"/>
    <property type="match status" value="1"/>
</dbReference>
<dbReference type="PANTHER" id="PTHR35799:SF1">
    <property type="entry name" value="S-RIBOSYLHOMOCYSTEINE LYASE"/>
    <property type="match status" value="1"/>
</dbReference>
<dbReference type="Pfam" id="PF02664">
    <property type="entry name" value="LuxS"/>
    <property type="match status" value="1"/>
</dbReference>
<dbReference type="PIRSF" id="PIRSF006160">
    <property type="entry name" value="AI2"/>
    <property type="match status" value="1"/>
</dbReference>
<dbReference type="PRINTS" id="PR01487">
    <property type="entry name" value="LUXSPROTEIN"/>
</dbReference>
<dbReference type="SUPFAM" id="SSF63411">
    <property type="entry name" value="LuxS/MPP-like metallohydrolase"/>
    <property type="match status" value="1"/>
</dbReference>
<feature type="chain" id="PRO_1000191045" description="S-ribosylhomocysteine lyase">
    <location>
        <begin position="1"/>
        <end position="160"/>
    </location>
</feature>
<feature type="binding site" evidence="1">
    <location>
        <position position="57"/>
    </location>
    <ligand>
        <name>Fe cation</name>
        <dbReference type="ChEBI" id="CHEBI:24875"/>
    </ligand>
</feature>
<feature type="binding site" evidence="1">
    <location>
        <position position="61"/>
    </location>
    <ligand>
        <name>Fe cation</name>
        <dbReference type="ChEBI" id="CHEBI:24875"/>
    </ligand>
</feature>
<feature type="binding site" evidence="1">
    <location>
        <position position="127"/>
    </location>
    <ligand>
        <name>Fe cation</name>
        <dbReference type="ChEBI" id="CHEBI:24875"/>
    </ligand>
</feature>
<reference key="1">
    <citation type="journal article" date="2009" name="BMC Genomics">
        <title>Evidence for niche adaptation in the genome of the bovine pathogen Streptococcus uberis.</title>
        <authorList>
            <person name="Ward P.N."/>
            <person name="Holden M.T.G."/>
            <person name="Leigh J.A."/>
            <person name="Lennard N."/>
            <person name="Bignell A."/>
            <person name="Barron A."/>
            <person name="Clark L."/>
            <person name="Quail M.A."/>
            <person name="Woodward J."/>
            <person name="Barrell B.G."/>
            <person name="Egan S.A."/>
            <person name="Field T.R."/>
            <person name="Maskell D."/>
            <person name="Kehoe M."/>
            <person name="Dowson C.G."/>
            <person name="Chanter N."/>
            <person name="Whatmore A.M."/>
            <person name="Bentley S.D."/>
            <person name="Parkhill J."/>
        </authorList>
    </citation>
    <scope>NUCLEOTIDE SEQUENCE [LARGE SCALE GENOMIC DNA]</scope>
    <source>
        <strain>ATCC BAA-854 / 0140J</strain>
    </source>
</reference>
<sequence length="160" mass="17937">MTKEVIVESFELDHTIVKAPYVRLISEEFGPKGDVITNFDVRLVQPNQNSIETAGLHTIEHLLAKLIRQRIDGMIDCSPFGCRTGFHLIMWGEHSSTEIAKVIKSSLEEIADGISWEDVPGTTIESCGNYKDHSLFAAKEWAKLILSQGISDQAFERHLV</sequence>
<gene>
    <name evidence="1" type="primary">luxS</name>
    <name type="ordered locus">SUB1399</name>
</gene>